<organism>
    <name type="scientific">Klebsiella aerogenes (strain ATCC 13048 / DSM 30053 / CCUG 1429 / JCM 1235 / KCTC 2190 / NBRC 13534 / NCIMB 10102 / NCTC 10006 / CDC 819-56)</name>
    <name type="common">Enterobacter aerogenes</name>
    <dbReference type="NCBI Taxonomy" id="1028307"/>
    <lineage>
        <taxon>Bacteria</taxon>
        <taxon>Pseudomonadati</taxon>
        <taxon>Pseudomonadota</taxon>
        <taxon>Gammaproteobacteria</taxon>
        <taxon>Enterobacterales</taxon>
        <taxon>Enterobacteriaceae</taxon>
        <taxon>Klebsiella/Raoultella group</taxon>
        <taxon>Klebsiella</taxon>
    </lineage>
</organism>
<comment type="function">
    <text>This protein responds to changes in Asp concentration in the environment, transduces a signal from the outside to the inside of the cell, and facilitates sensory adaptation through various levels of methylation.</text>
</comment>
<comment type="function">
    <text>Chemotactic-signal transducers respond to changes in the concentration of attractants and repellents in the environment, transduce a signal from the outside to the inside of the cell, and facilitate sensory adaptation through the variation of the level of methylation. Attractants increase the level of methylation while repellents decrease the level of methylation, the methyl groups are added by the methyltransferase CheR and removed by the methylesterase CheB.</text>
</comment>
<comment type="subcellular location">
    <subcellularLocation>
        <location>Cell inner membrane</location>
        <topology>Multi-pass membrane protein</topology>
    </subcellularLocation>
</comment>
<comment type="similarity">
    <text evidence="5">Belongs to the methyl-accepting chemotaxis (MCP) protein family.</text>
</comment>
<reference key="1">
    <citation type="journal article" date="1989" name="J. Bacteriol.">
        <title>Evolution of chemotactic-signal transducers in enteric bacteria.</title>
        <authorList>
            <person name="Dahl M.K."/>
            <person name="Boos W."/>
            <person name="Manson M.D."/>
        </authorList>
    </citation>
    <scope>NUCLEOTIDE SEQUENCE [GENOMIC DNA]</scope>
    <source>
        <strain>ATCC 13048 / DSM 30053 / CCUG 1429 / JCM 1235 / KCTC 2190 / NBRC 13534 / NCIMB 10102 / NCTC 10006 / CDC 819-56</strain>
    </source>
</reference>
<reference key="2">
    <citation type="journal article" date="2012" name="J. Bacteriol.">
        <title>Complete genome sequence of Enterobacter aerogenes KCTC 2190.</title>
        <authorList>
            <person name="Shin S.H."/>
            <person name="Kim S."/>
            <person name="Kim J.Y."/>
            <person name="Lee S."/>
            <person name="Um Y."/>
            <person name="Oh M.K."/>
            <person name="Kim Y.R."/>
            <person name="Lee J."/>
            <person name="Yang K.S."/>
        </authorList>
    </citation>
    <scope>NUCLEOTIDE SEQUENCE [LARGE SCALE GENOMIC DNA]</scope>
    <source>
        <strain>ATCC 13048 / DSM 30053 / CCUG 1429 / JCM 1235 / KCTC 2190 / NBRC 13534 / NCIMB 10102 / NCTC 10006 / CDC 819-56</strain>
    </source>
</reference>
<evidence type="ECO:0000250" key="1"/>
<evidence type="ECO:0000255" key="2"/>
<evidence type="ECO:0000255" key="3">
    <source>
        <dbReference type="PROSITE-ProRule" id="PRU00102"/>
    </source>
</evidence>
<evidence type="ECO:0000255" key="4">
    <source>
        <dbReference type="PROSITE-ProRule" id="PRU00284"/>
    </source>
</evidence>
<evidence type="ECO:0000305" key="5"/>
<proteinExistence type="inferred from homology"/>
<dbReference type="EMBL" id="M26411">
    <property type="protein sequence ID" value="AAA24798.1"/>
    <property type="molecule type" value="Genomic_DNA"/>
</dbReference>
<dbReference type="EMBL" id="CP002824">
    <property type="protein sequence ID" value="AEG98019.1"/>
    <property type="molecule type" value="Genomic_DNA"/>
</dbReference>
<dbReference type="PIR" id="D32302">
    <property type="entry name" value="D32302"/>
</dbReference>
<dbReference type="RefSeq" id="WP_015704930.1">
    <property type="nucleotide sequence ID" value="NC_015663.1"/>
</dbReference>
<dbReference type="RefSeq" id="YP_004593298.1">
    <property type="nucleotide sequence ID" value="NC_015663.1"/>
</dbReference>
<dbReference type="SMR" id="P21823"/>
<dbReference type="KEGG" id="eae:EAE_15540"/>
<dbReference type="PATRIC" id="fig|1028307.3.peg.3108"/>
<dbReference type="eggNOG" id="COG0840">
    <property type="taxonomic scope" value="Bacteria"/>
</dbReference>
<dbReference type="HOGENOM" id="CLU_000445_107_16_6"/>
<dbReference type="OrthoDB" id="9765776at2"/>
<dbReference type="Proteomes" id="UP000008881">
    <property type="component" value="Chromosome"/>
</dbReference>
<dbReference type="GO" id="GO:0005886">
    <property type="term" value="C:plasma membrane"/>
    <property type="evidence" value="ECO:0007669"/>
    <property type="project" value="UniProtKB-SubCell"/>
</dbReference>
<dbReference type="GO" id="GO:0004888">
    <property type="term" value="F:transmembrane signaling receptor activity"/>
    <property type="evidence" value="ECO:0007669"/>
    <property type="project" value="InterPro"/>
</dbReference>
<dbReference type="GO" id="GO:0006935">
    <property type="term" value="P:chemotaxis"/>
    <property type="evidence" value="ECO:0007669"/>
    <property type="project" value="UniProtKB-KW"/>
</dbReference>
<dbReference type="GO" id="GO:0007165">
    <property type="term" value="P:signal transduction"/>
    <property type="evidence" value="ECO:0007669"/>
    <property type="project" value="UniProtKB-KW"/>
</dbReference>
<dbReference type="CDD" id="cd06225">
    <property type="entry name" value="HAMP"/>
    <property type="match status" value="1"/>
</dbReference>
<dbReference type="CDD" id="cd11386">
    <property type="entry name" value="MCP_signal"/>
    <property type="match status" value="1"/>
</dbReference>
<dbReference type="CDD" id="cd19407">
    <property type="entry name" value="Tar_Tsr_sensor"/>
    <property type="match status" value="1"/>
</dbReference>
<dbReference type="FunFam" id="1.10.287.950:FF:000001">
    <property type="entry name" value="Methyl-accepting chemotaxis sensory transducer"/>
    <property type="match status" value="1"/>
</dbReference>
<dbReference type="Gene3D" id="1.20.120.30">
    <property type="entry name" value="Aspartate receptor, ligand-binding domain"/>
    <property type="match status" value="1"/>
</dbReference>
<dbReference type="Gene3D" id="1.10.287.950">
    <property type="entry name" value="Methyl-accepting chemotaxis protein"/>
    <property type="match status" value="1"/>
</dbReference>
<dbReference type="InterPro" id="IPR035440">
    <property type="entry name" value="4HB_MCP_dom_sf"/>
</dbReference>
<dbReference type="InterPro" id="IPR004090">
    <property type="entry name" value="Chemotax_Me-accpt_rcpt"/>
</dbReference>
<dbReference type="InterPro" id="IPR004091">
    <property type="entry name" value="Chemotax_Me-accpt_rcpt_Me-site"/>
</dbReference>
<dbReference type="InterPro" id="IPR003660">
    <property type="entry name" value="HAMP_dom"/>
</dbReference>
<dbReference type="InterPro" id="IPR051310">
    <property type="entry name" value="MCP_chemotaxis"/>
</dbReference>
<dbReference type="InterPro" id="IPR004089">
    <property type="entry name" value="MCPsignal_dom"/>
</dbReference>
<dbReference type="InterPro" id="IPR003122">
    <property type="entry name" value="Tar_rcpt_lig-bd"/>
</dbReference>
<dbReference type="PANTHER" id="PTHR43531:SF14">
    <property type="entry name" value="METHYL-ACCEPTING CHEMOTAXIS PROTEIN I-RELATED"/>
    <property type="match status" value="1"/>
</dbReference>
<dbReference type="PANTHER" id="PTHR43531">
    <property type="entry name" value="PROTEIN ICFG"/>
    <property type="match status" value="1"/>
</dbReference>
<dbReference type="Pfam" id="PF00672">
    <property type="entry name" value="HAMP"/>
    <property type="match status" value="1"/>
</dbReference>
<dbReference type="Pfam" id="PF00015">
    <property type="entry name" value="MCPsignal"/>
    <property type="match status" value="1"/>
</dbReference>
<dbReference type="Pfam" id="PF02203">
    <property type="entry name" value="TarH"/>
    <property type="match status" value="1"/>
</dbReference>
<dbReference type="PRINTS" id="PR00260">
    <property type="entry name" value="CHEMTRNSDUCR"/>
</dbReference>
<dbReference type="SMART" id="SM00304">
    <property type="entry name" value="HAMP"/>
    <property type="match status" value="1"/>
</dbReference>
<dbReference type="SMART" id="SM00283">
    <property type="entry name" value="MA"/>
    <property type="match status" value="1"/>
</dbReference>
<dbReference type="SMART" id="SM00319">
    <property type="entry name" value="TarH"/>
    <property type="match status" value="1"/>
</dbReference>
<dbReference type="SUPFAM" id="SSF47170">
    <property type="entry name" value="Aspartate receptor, ligand-binding domain"/>
    <property type="match status" value="1"/>
</dbReference>
<dbReference type="SUPFAM" id="SSF58104">
    <property type="entry name" value="Methyl-accepting chemotaxis protein (MCP) signaling domain"/>
    <property type="match status" value="1"/>
</dbReference>
<dbReference type="PROSITE" id="PS00538">
    <property type="entry name" value="CHEMOTAXIS_TRANSDUC_1"/>
    <property type="match status" value="1"/>
</dbReference>
<dbReference type="PROSITE" id="PS50111">
    <property type="entry name" value="CHEMOTAXIS_TRANSDUC_2"/>
    <property type="match status" value="1"/>
</dbReference>
<dbReference type="PROSITE" id="PS50885">
    <property type="entry name" value="HAMP"/>
    <property type="match status" value="1"/>
</dbReference>
<protein>
    <recommendedName>
        <fullName>Methyl-accepting chemotaxis aspartate transducer</fullName>
    </recommendedName>
</protein>
<accession>P21823</accession>
<accession>G0DZQ7</accession>
<gene>
    <name type="primary">tas</name>
    <name type="ordered locus">EAE_15540</name>
</gene>
<feature type="chain" id="PRO_0000110542" description="Methyl-accepting chemotaxis aspartate transducer">
    <location>
        <begin position="1"/>
        <end position="536"/>
    </location>
</feature>
<feature type="topological domain" description="Cytoplasmic" evidence="2">
    <location>
        <begin position="1"/>
        <end position="10"/>
    </location>
</feature>
<feature type="transmembrane region" description="Helical" evidence="2">
    <location>
        <begin position="11"/>
        <end position="31"/>
    </location>
</feature>
<feature type="topological domain" description="Periplasmic" evidence="2">
    <location>
        <begin position="32"/>
        <end position="188"/>
    </location>
</feature>
<feature type="transmembrane region" description="Helical" evidence="2">
    <location>
        <begin position="189"/>
        <end position="209"/>
    </location>
</feature>
<feature type="topological domain" description="Cytoplasmic" evidence="2">
    <location>
        <begin position="210"/>
        <end position="536"/>
    </location>
</feature>
<feature type="domain" description="HAMP" evidence="3">
    <location>
        <begin position="212"/>
        <end position="264"/>
    </location>
</feature>
<feature type="domain" description="Methyl-accepting transducer" evidence="4">
    <location>
        <begin position="269"/>
        <end position="498"/>
    </location>
</feature>
<feature type="region of interest" description="The 3 Arg may form a positively charged pocket, which binds the alpha-carboxyl group of the attractant AA" evidence="1">
    <location>
        <begin position="64"/>
        <end position="73"/>
    </location>
</feature>
<feature type="modified residue" description="Glutamate methyl ester (Gln)" evidence="1">
    <location>
        <position position="293"/>
    </location>
</feature>
<feature type="modified residue" description="Glutamate methyl ester (Glu)" evidence="1">
    <location>
        <position position="300"/>
    </location>
</feature>
<feature type="modified residue" description="Glutamate methyl ester (Gln)" evidence="1">
    <location>
        <position position="307"/>
    </location>
</feature>
<feature type="modified residue" description="Glutamate methyl ester (Glu)" evidence="1">
    <location>
        <position position="489"/>
    </location>
</feature>
<feature type="modified residue" description="Glutamate methyl ester (Glu)" evidence="1">
    <location>
        <position position="498"/>
    </location>
</feature>
<feature type="sequence conflict" description="In Ref. 1; AAA24798." evidence="5" ref="1">
    <original>ALRADNHNLERITVSSQQR</original>
    <variation>RYAPTTTILNVLPSVAST</variation>
    <location>
        <begin position="32"/>
        <end position="50"/>
    </location>
</feature>
<feature type="sequence conflict" description="In Ref. 1; AAA24798." evidence="5" ref="1">
    <original>AALKVPQEQVD</original>
    <variation>GAEGAAGAGGS</variation>
    <location>
        <begin position="74"/>
        <end position="84"/>
    </location>
</feature>
<feature type="sequence conflict" description="In Ref. 1; AAA24798." evidence="5" ref="1">
    <original>GGARSSLQKADLYFNQFLDTPRADEQEQQLADATRDSYENLRG</original>
    <variation>AAPAARCKKPISILTSSSTRLARMSRNSSWPMPRVIATRIY</variation>
    <location>
        <begin position="88"/>
        <end position="130"/>
    </location>
</feature>
<feature type="sequence conflict" description="In Ref. 1; AAA24798." evidence="5" ref="1">
    <original>GWS</original>
    <variation>ALVP</variation>
    <location>
        <begin position="186"/>
        <end position="188"/>
    </location>
</feature>
<feature type="sequence conflict" description="In Ref. 1; AAA24798." evidence="5" ref="1">
    <original>AA</original>
    <variation>DR</variation>
    <location>
        <begin position="295"/>
        <end position="296"/>
    </location>
</feature>
<feature type="sequence conflict" description="In Ref. 1; AAA24798." evidence="5" ref="1">
    <original>GGE</original>
    <variation>RT</variation>
    <location>
        <begin position="336"/>
        <end position="338"/>
    </location>
</feature>
<feature type="sequence conflict" description="In Ref. 1; AAA24798." evidence="5" ref="1">
    <original>VTQMD</original>
    <variation>LPRY</variation>
    <location>
        <begin position="473"/>
        <end position="477"/>
    </location>
</feature>
<feature type="sequence conflict" description="In Ref. 1; AAA24798." evidence="5" ref="1">
    <location>
        <begin position="517"/>
        <end position="536"/>
    </location>
</feature>
<name>MCPD_KLEAK</name>
<keyword id="KW-0997">Cell inner membrane</keyword>
<keyword id="KW-1003">Cell membrane</keyword>
<keyword id="KW-0145">Chemotaxis</keyword>
<keyword id="KW-0472">Membrane</keyword>
<keyword id="KW-0488">Methylation</keyword>
<keyword id="KW-1185">Reference proteome</keyword>
<keyword id="KW-0807">Transducer</keyword>
<keyword id="KW-0812">Transmembrane</keyword>
<keyword id="KW-1133">Transmembrane helix</keyword>
<sequence>MFNRIRISTSLFLLLISFCIMQLISTGLSYVALRADNHNLERITVSSQQRDALSLSWVSLLQARNTLNRAGTRAALKVPQEQVDALMGGARSSLQKADLYFNQFLDTPRADEQEQQLADATRDSYENLRGALRELIVFLENRNLQAFMDQPTQKIQDRFEADFVQYLQLAKATTDEASASSQQAYGWSIWLVAGAVLMLLVVTLSAMWWLRTMLVQPLNIIRGHFERIASGDLSAPIEVYGRNEISQLFASLQRMQQSLIGTVGAVRDGAESILIGLQEIAEGNNDLSSRTEQQAASLEETAASMEQLTATVKQNADNARQASQLARDASSTAAKGGELADDVVTTMHDIANSSQKIGAITSVIDGIAFQTNILALNAAVEAARAGEQGRGFAVVAGEVRNLASRSAQAAKEIKLLIDESVSRVKHGSVLVENSGATMQDIVRSVTRVTDIMGEIASASDEQSRGIEQVTQAVTQMDQVTQQNAALVVESASAAAALEEQAITLADAVAVFRLADDNFVAPETSSTVKETLDCQTA</sequence>